<organism>
    <name type="scientific">Escherichia coli O157:H7</name>
    <dbReference type="NCBI Taxonomy" id="83334"/>
    <lineage>
        <taxon>Bacteria</taxon>
        <taxon>Pseudomonadati</taxon>
        <taxon>Pseudomonadota</taxon>
        <taxon>Gammaproteobacteria</taxon>
        <taxon>Enterobacterales</taxon>
        <taxon>Enterobacteriaceae</taxon>
        <taxon>Escherichia</taxon>
    </lineage>
</organism>
<keyword id="KW-1185">Reference proteome</keyword>
<keyword id="KW-0732">Signal</keyword>
<feature type="signal peptide" evidence="2">
    <location>
        <begin position="1"/>
        <end position="19"/>
    </location>
</feature>
<feature type="chain" id="PRO_0000043386" description="Curli production assembly/transport component CsgF">
    <location>
        <begin position="20"/>
        <end position="138"/>
    </location>
</feature>
<proteinExistence type="inferred from homology"/>
<reference key="1">
    <citation type="journal article" date="2001" name="Nature">
        <title>Genome sequence of enterohaemorrhagic Escherichia coli O157:H7.</title>
        <authorList>
            <person name="Perna N.T."/>
            <person name="Plunkett G. III"/>
            <person name="Burland V."/>
            <person name="Mau B."/>
            <person name="Glasner J.D."/>
            <person name="Rose D.J."/>
            <person name="Mayhew G.F."/>
            <person name="Evans P.S."/>
            <person name="Gregor J."/>
            <person name="Kirkpatrick H.A."/>
            <person name="Posfai G."/>
            <person name="Hackett J."/>
            <person name="Klink S."/>
            <person name="Boutin A."/>
            <person name="Shao Y."/>
            <person name="Miller L."/>
            <person name="Grotbeck E.J."/>
            <person name="Davis N.W."/>
            <person name="Lim A."/>
            <person name="Dimalanta E.T."/>
            <person name="Potamousis K."/>
            <person name="Apodaca J."/>
            <person name="Anantharaman T.S."/>
            <person name="Lin J."/>
            <person name="Yen G."/>
            <person name="Schwartz D.C."/>
            <person name="Welch R.A."/>
            <person name="Blattner F.R."/>
        </authorList>
    </citation>
    <scope>NUCLEOTIDE SEQUENCE [LARGE SCALE GENOMIC DNA]</scope>
    <source>
        <strain>O157:H7 / EDL933 / ATCC 700927 / EHEC</strain>
    </source>
</reference>
<reference key="2">
    <citation type="journal article" date="2001" name="DNA Res.">
        <title>Complete genome sequence of enterohemorrhagic Escherichia coli O157:H7 and genomic comparison with a laboratory strain K-12.</title>
        <authorList>
            <person name="Hayashi T."/>
            <person name="Makino K."/>
            <person name="Ohnishi M."/>
            <person name="Kurokawa K."/>
            <person name="Ishii K."/>
            <person name="Yokoyama K."/>
            <person name="Han C.-G."/>
            <person name="Ohtsubo E."/>
            <person name="Nakayama K."/>
            <person name="Murata T."/>
            <person name="Tanaka M."/>
            <person name="Tobe T."/>
            <person name="Iida T."/>
            <person name="Takami H."/>
            <person name="Honda T."/>
            <person name="Sasakawa C."/>
            <person name="Ogasawara N."/>
            <person name="Yasunaga T."/>
            <person name="Kuhara S."/>
            <person name="Shiba T."/>
            <person name="Hattori M."/>
            <person name="Shinagawa H."/>
        </authorList>
    </citation>
    <scope>NUCLEOTIDE SEQUENCE [LARGE SCALE GENOMIC DNA]</scope>
    <source>
        <strain>O157:H7 / Sakai / RIMD 0509952 / EHEC</strain>
    </source>
</reference>
<name>CSGF_ECO57</name>
<dbReference type="EMBL" id="AE005174">
    <property type="protein sequence ID" value="AAG55784.1"/>
    <property type="molecule type" value="Genomic_DNA"/>
</dbReference>
<dbReference type="EMBL" id="BA000007">
    <property type="protein sequence ID" value="BAB34838.1"/>
    <property type="molecule type" value="Genomic_DNA"/>
</dbReference>
<dbReference type="PIR" id="G90805">
    <property type="entry name" value="G90805"/>
</dbReference>
<dbReference type="RefSeq" id="NP_309442.1">
    <property type="nucleotide sequence ID" value="NC_002695.1"/>
</dbReference>
<dbReference type="RefSeq" id="WP_001264088.1">
    <property type="nucleotide sequence ID" value="NZ_VOAI01000018.1"/>
</dbReference>
<dbReference type="SMR" id="P0AEA0"/>
<dbReference type="STRING" id="155864.Z1671"/>
<dbReference type="GeneID" id="913765"/>
<dbReference type="GeneID" id="93776380"/>
<dbReference type="KEGG" id="ece:Z1671"/>
<dbReference type="KEGG" id="ecs:ECs_1415"/>
<dbReference type="PATRIC" id="fig|386585.9.peg.1515"/>
<dbReference type="eggNOG" id="ENOG5032U3R">
    <property type="taxonomic scope" value="Bacteria"/>
</dbReference>
<dbReference type="HOGENOM" id="CLU_136740_0_0_6"/>
<dbReference type="OMA" id="TFNYQWL"/>
<dbReference type="Proteomes" id="UP000000558">
    <property type="component" value="Chromosome"/>
</dbReference>
<dbReference type="Proteomes" id="UP000002519">
    <property type="component" value="Chromosome"/>
</dbReference>
<dbReference type="InterPro" id="IPR018893">
    <property type="entry name" value="T8SS_CsgF"/>
</dbReference>
<dbReference type="NCBIfam" id="NF007469">
    <property type="entry name" value="PRK10050.1"/>
    <property type="match status" value="1"/>
</dbReference>
<dbReference type="Pfam" id="PF10614">
    <property type="entry name" value="CsgF"/>
    <property type="match status" value="1"/>
</dbReference>
<sequence>MRVKHAVVLLMLISPLSWAGTMTFQFRNPNFGGNPNNGAFLLNSAQAQNSYKDPSYNDDFGIETPSALDNFTQAIQSQILGGLLSNINTGKPGRMVTNDYIVDIANRDGQLQLNVTDRKTGQTSTIQVSGLQNNSTDF</sequence>
<comment type="function">
    <text evidence="1">May be involved in the biogenesis of curli organelles.</text>
</comment>
<accession>P0AEA0</accession>
<accession>P52104</accession>
<gene>
    <name type="primary">csgF</name>
    <name type="ordered locus">Z1671</name>
    <name type="ordered locus">ECs1415</name>
</gene>
<protein>
    <recommendedName>
        <fullName>Curli production assembly/transport component CsgF</fullName>
    </recommendedName>
</protein>
<evidence type="ECO:0000250" key="1"/>
<evidence type="ECO:0000255" key="2"/>